<evidence type="ECO:0000255" key="1">
    <source>
        <dbReference type="HAMAP-Rule" id="MF_01007"/>
    </source>
</evidence>
<feature type="chain" id="PRO_0000223536" description="Ribosomal RNA small subunit methyltransferase H">
    <location>
        <begin position="1"/>
        <end position="328"/>
    </location>
</feature>
<feature type="binding site" evidence="1">
    <location>
        <begin position="35"/>
        <end position="37"/>
    </location>
    <ligand>
        <name>S-adenosyl-L-methionine</name>
        <dbReference type="ChEBI" id="CHEBI:59789"/>
    </ligand>
</feature>
<feature type="binding site" evidence="1">
    <location>
        <position position="60"/>
    </location>
    <ligand>
        <name>S-adenosyl-L-methionine</name>
        <dbReference type="ChEBI" id="CHEBI:59789"/>
    </ligand>
</feature>
<feature type="binding site" evidence="1">
    <location>
        <position position="87"/>
    </location>
    <ligand>
        <name>S-adenosyl-L-methionine</name>
        <dbReference type="ChEBI" id="CHEBI:59789"/>
    </ligand>
</feature>
<feature type="binding site" evidence="1">
    <location>
        <position position="113"/>
    </location>
    <ligand>
        <name>S-adenosyl-L-methionine</name>
        <dbReference type="ChEBI" id="CHEBI:59789"/>
    </ligand>
</feature>
<feature type="binding site" evidence="1">
    <location>
        <position position="120"/>
    </location>
    <ligand>
        <name>S-adenosyl-L-methionine</name>
        <dbReference type="ChEBI" id="CHEBI:59789"/>
    </ligand>
</feature>
<reference key="1">
    <citation type="submission" date="2005-08" db="EMBL/GenBank/DDBJ databases">
        <title>Complete sequence of Chlorobium chlorochromatii CaD3.</title>
        <authorList>
            <consortium name="US DOE Joint Genome Institute"/>
            <person name="Copeland A."/>
            <person name="Lucas S."/>
            <person name="Lapidus A."/>
            <person name="Barry K."/>
            <person name="Detter J.C."/>
            <person name="Glavina T."/>
            <person name="Hammon N."/>
            <person name="Israni S."/>
            <person name="Pitluck S."/>
            <person name="Bryant D."/>
            <person name="Schmutz J."/>
            <person name="Larimer F."/>
            <person name="Land M."/>
            <person name="Kyrpides N."/>
            <person name="Ivanova N."/>
            <person name="Richardson P."/>
        </authorList>
    </citation>
    <scope>NUCLEOTIDE SEQUENCE [LARGE SCALE GENOMIC DNA]</scope>
    <source>
        <strain>CaD3</strain>
    </source>
</reference>
<name>RSMH_CHLCH</name>
<comment type="function">
    <text evidence="1">Specifically methylates the N4 position of cytidine in position 1402 (C1402) of 16S rRNA.</text>
</comment>
<comment type="catalytic activity">
    <reaction evidence="1">
        <text>cytidine(1402) in 16S rRNA + S-adenosyl-L-methionine = N(4)-methylcytidine(1402) in 16S rRNA + S-adenosyl-L-homocysteine + H(+)</text>
        <dbReference type="Rhea" id="RHEA:42928"/>
        <dbReference type="Rhea" id="RHEA-COMP:10286"/>
        <dbReference type="Rhea" id="RHEA-COMP:10287"/>
        <dbReference type="ChEBI" id="CHEBI:15378"/>
        <dbReference type="ChEBI" id="CHEBI:57856"/>
        <dbReference type="ChEBI" id="CHEBI:59789"/>
        <dbReference type="ChEBI" id="CHEBI:74506"/>
        <dbReference type="ChEBI" id="CHEBI:82748"/>
        <dbReference type="EC" id="2.1.1.199"/>
    </reaction>
</comment>
<comment type="subcellular location">
    <subcellularLocation>
        <location evidence="1">Cytoplasm</location>
    </subcellularLocation>
</comment>
<comment type="similarity">
    <text evidence="1">Belongs to the methyltransferase superfamily. RsmH family.</text>
</comment>
<keyword id="KW-0963">Cytoplasm</keyword>
<keyword id="KW-0489">Methyltransferase</keyword>
<keyword id="KW-0698">rRNA processing</keyword>
<keyword id="KW-0949">S-adenosyl-L-methionine</keyword>
<keyword id="KW-0808">Transferase</keyword>
<protein>
    <recommendedName>
        <fullName evidence="1">Ribosomal RNA small subunit methyltransferase H</fullName>
        <ecNumber evidence="1">2.1.1.199</ecNumber>
    </recommendedName>
    <alternativeName>
        <fullName evidence="1">16S rRNA m(4)C1402 methyltransferase</fullName>
    </alternativeName>
    <alternativeName>
        <fullName evidence="1">rRNA (cytosine-N(4)-)-methyltransferase RsmH</fullName>
    </alternativeName>
</protein>
<gene>
    <name evidence="1" type="primary">rsmH</name>
    <name type="synonym">mraW</name>
    <name type="ordered locus">Cag_0047</name>
</gene>
<proteinExistence type="inferred from homology"/>
<sequence>MALHDTYHDPVLAAEVVATLVQRSGIYVDGTLGGGSHSLALLQALQAQGLLESSLLIGIDQDSDALAMAAERLQAWQPYTRLLKGNFRDMASLVQQLCDAEGRACAVTGVLLDLGVSSFQLDTAERGFSYMRSGPLDMRMDNTAPLTAAELINHADEAELARIFYHYGEEPRSRALARAVVQQREKMGNFTTTEELAALVRRLTHGGEKAVIKTLSRLFQALRIAVNDELGALHEVLEGALELLDGNGRLAVMSYHSLEDRVVKHFFTHHAQCDWGPKGVALREPLSQGALTIVTKRPMLASADEIERNPRARSAKLRVAAKNQPKTI</sequence>
<organism>
    <name type="scientific">Chlorobium chlorochromatii (strain CaD3)</name>
    <dbReference type="NCBI Taxonomy" id="340177"/>
    <lineage>
        <taxon>Bacteria</taxon>
        <taxon>Pseudomonadati</taxon>
        <taxon>Chlorobiota</taxon>
        <taxon>Chlorobiia</taxon>
        <taxon>Chlorobiales</taxon>
        <taxon>Chlorobiaceae</taxon>
        <taxon>Chlorobium/Pelodictyon group</taxon>
        <taxon>Chlorobium</taxon>
    </lineage>
</organism>
<dbReference type="EC" id="2.1.1.199" evidence="1"/>
<dbReference type="EMBL" id="CP000108">
    <property type="protein sequence ID" value="ABB27326.1"/>
    <property type="molecule type" value="Genomic_DNA"/>
</dbReference>
<dbReference type="SMR" id="Q3ANW1"/>
<dbReference type="STRING" id="340177.Cag_0047"/>
<dbReference type="KEGG" id="cch:Cag_0047"/>
<dbReference type="eggNOG" id="COG0275">
    <property type="taxonomic scope" value="Bacteria"/>
</dbReference>
<dbReference type="HOGENOM" id="CLU_038422_3_0_10"/>
<dbReference type="OrthoDB" id="9806637at2"/>
<dbReference type="GO" id="GO:0005737">
    <property type="term" value="C:cytoplasm"/>
    <property type="evidence" value="ECO:0007669"/>
    <property type="project" value="UniProtKB-SubCell"/>
</dbReference>
<dbReference type="GO" id="GO:0071424">
    <property type="term" value="F:rRNA (cytosine-N4-)-methyltransferase activity"/>
    <property type="evidence" value="ECO:0007669"/>
    <property type="project" value="UniProtKB-UniRule"/>
</dbReference>
<dbReference type="GO" id="GO:0070475">
    <property type="term" value="P:rRNA base methylation"/>
    <property type="evidence" value="ECO:0007669"/>
    <property type="project" value="UniProtKB-UniRule"/>
</dbReference>
<dbReference type="Gene3D" id="1.10.150.170">
    <property type="entry name" value="Putative methyltransferase TM0872, insert domain"/>
    <property type="match status" value="1"/>
</dbReference>
<dbReference type="Gene3D" id="3.40.50.150">
    <property type="entry name" value="Vaccinia Virus protein VP39"/>
    <property type="match status" value="1"/>
</dbReference>
<dbReference type="HAMAP" id="MF_01007">
    <property type="entry name" value="16SrRNA_methyltr_H"/>
    <property type="match status" value="1"/>
</dbReference>
<dbReference type="InterPro" id="IPR002903">
    <property type="entry name" value="RsmH"/>
</dbReference>
<dbReference type="InterPro" id="IPR023397">
    <property type="entry name" value="SAM-dep_MeTrfase_MraW_recog"/>
</dbReference>
<dbReference type="InterPro" id="IPR029063">
    <property type="entry name" value="SAM-dependent_MTases_sf"/>
</dbReference>
<dbReference type="NCBIfam" id="TIGR00006">
    <property type="entry name" value="16S rRNA (cytosine(1402)-N(4))-methyltransferase RsmH"/>
    <property type="match status" value="1"/>
</dbReference>
<dbReference type="PANTHER" id="PTHR11265:SF0">
    <property type="entry name" value="12S RRNA N4-METHYLCYTIDINE METHYLTRANSFERASE"/>
    <property type="match status" value="1"/>
</dbReference>
<dbReference type="PANTHER" id="PTHR11265">
    <property type="entry name" value="S-ADENOSYL-METHYLTRANSFERASE MRAW"/>
    <property type="match status" value="1"/>
</dbReference>
<dbReference type="Pfam" id="PF01795">
    <property type="entry name" value="Methyltransf_5"/>
    <property type="match status" value="1"/>
</dbReference>
<dbReference type="PIRSF" id="PIRSF004486">
    <property type="entry name" value="MraW"/>
    <property type="match status" value="1"/>
</dbReference>
<dbReference type="SUPFAM" id="SSF81799">
    <property type="entry name" value="Putative methyltransferase TM0872, insert domain"/>
    <property type="match status" value="1"/>
</dbReference>
<dbReference type="SUPFAM" id="SSF53335">
    <property type="entry name" value="S-adenosyl-L-methionine-dependent methyltransferases"/>
    <property type="match status" value="1"/>
</dbReference>
<accession>Q3ANW1</accession>